<sequence length="542" mass="62545">MIFKNTRRSYQIIATFLRYGIDEIIPDIPFTYSARLTRKAFFWLQNEHKDQPFGVRLRLALQELGPVWIKLGQMLATRRDLFEPALADQLALLQDSVAPFDGKLARKIIEQALGNTLETWFDDFDEQALASASIAQVHTATFNKNQPLAGQNVVLKVIRPDIEHIIKADIALMYQLAKLIPYLSDDAKRLRATEVVREYEKTLLDELDLTREMANAIRLRNNFENSEMLYVPAMYPDFCHKNVIVMERIYGIPVSDIATLTENGTNMKLLAERGVQVFFTQVFRDSFFHADMHAGNIFVNPNHPEDPQYIGIDCGIVGTLNQNDKRYLAESFVAFFNRDYRRVALMHIESGWTPADTDVDAFEEAFRTVCEPIFAKPLAEISFGQVLLNLFNVARQFNMEVQPQLVLLQKTLLYIEGLGRQVYPALDLWQTAKPFLQKWLDQQVGFKAILRDLKQQAPQFREHFAQFPEAVFNALQQQKHINYRLAELNKTLQSQADNKTYNVKMIIMGSIILSLLWQFNSLPLWLSLPILTMLCLALCRRK</sequence>
<gene>
    <name evidence="1" type="primary">ubiB</name>
    <name type="ordered locus">HD_0717</name>
</gene>
<organism>
    <name type="scientific">Haemophilus ducreyi (strain 35000HP / ATCC 700724)</name>
    <dbReference type="NCBI Taxonomy" id="233412"/>
    <lineage>
        <taxon>Bacteria</taxon>
        <taxon>Pseudomonadati</taxon>
        <taxon>Pseudomonadota</taxon>
        <taxon>Gammaproteobacteria</taxon>
        <taxon>Pasteurellales</taxon>
        <taxon>Pasteurellaceae</taxon>
        <taxon>Haemophilus</taxon>
    </lineage>
</organism>
<name>UBIB_HAEDU</name>
<proteinExistence type="inferred from homology"/>
<reference key="1">
    <citation type="submission" date="2003-06" db="EMBL/GenBank/DDBJ databases">
        <title>The complete genome sequence of Haemophilus ducreyi.</title>
        <authorList>
            <person name="Munson R.S. Jr."/>
            <person name="Ray W.C."/>
            <person name="Mahairas G."/>
            <person name="Sabo P."/>
            <person name="Mungur R."/>
            <person name="Johnson L."/>
            <person name="Nguyen D."/>
            <person name="Wang J."/>
            <person name="Forst C."/>
            <person name="Hood L."/>
        </authorList>
    </citation>
    <scope>NUCLEOTIDE SEQUENCE [LARGE SCALE GENOMIC DNA]</scope>
    <source>
        <strain>35000HP / ATCC 700724</strain>
    </source>
</reference>
<protein>
    <recommendedName>
        <fullName evidence="1">Probable protein kinase UbiB</fullName>
        <ecNumber evidence="1">2.7.-.-</ecNumber>
    </recommendedName>
    <alternativeName>
        <fullName evidence="1">Ubiquinone biosynthesis protein UbiB</fullName>
    </alternativeName>
</protein>
<accession>Q7VN62</accession>
<evidence type="ECO:0000255" key="1">
    <source>
        <dbReference type="HAMAP-Rule" id="MF_00414"/>
    </source>
</evidence>
<feature type="chain" id="PRO_0000200707" description="Probable protein kinase UbiB">
    <location>
        <begin position="1"/>
        <end position="542"/>
    </location>
</feature>
<feature type="transmembrane region" description="Helical" evidence="1">
    <location>
        <begin position="506"/>
        <end position="526"/>
    </location>
</feature>
<feature type="domain" description="Protein kinase" evidence="1">
    <location>
        <begin position="123"/>
        <end position="505"/>
    </location>
</feature>
<feature type="active site" description="Proton acceptor" evidence="1">
    <location>
        <position position="291"/>
    </location>
</feature>
<feature type="binding site" evidence="1">
    <location>
        <begin position="129"/>
        <end position="137"/>
    </location>
    <ligand>
        <name>ATP</name>
        <dbReference type="ChEBI" id="CHEBI:30616"/>
    </ligand>
</feature>
<feature type="binding site" evidence="1">
    <location>
        <position position="156"/>
    </location>
    <ligand>
        <name>ATP</name>
        <dbReference type="ChEBI" id="CHEBI:30616"/>
    </ligand>
</feature>
<dbReference type="EC" id="2.7.-.-" evidence="1"/>
<dbReference type="EMBL" id="AE017143">
    <property type="protein sequence ID" value="AAP95631.1"/>
    <property type="molecule type" value="Genomic_DNA"/>
</dbReference>
<dbReference type="RefSeq" id="WP_010944683.1">
    <property type="nucleotide sequence ID" value="NC_002940.2"/>
</dbReference>
<dbReference type="SMR" id="Q7VN62"/>
<dbReference type="STRING" id="233412.HD_0717"/>
<dbReference type="KEGG" id="hdu:HD_0717"/>
<dbReference type="eggNOG" id="COG0661">
    <property type="taxonomic scope" value="Bacteria"/>
</dbReference>
<dbReference type="HOGENOM" id="CLU_006533_0_0_6"/>
<dbReference type="OrthoDB" id="9795390at2"/>
<dbReference type="UniPathway" id="UPA00232"/>
<dbReference type="Proteomes" id="UP000001022">
    <property type="component" value="Chromosome"/>
</dbReference>
<dbReference type="GO" id="GO:0005886">
    <property type="term" value="C:plasma membrane"/>
    <property type="evidence" value="ECO:0007669"/>
    <property type="project" value="UniProtKB-SubCell"/>
</dbReference>
<dbReference type="GO" id="GO:0005524">
    <property type="term" value="F:ATP binding"/>
    <property type="evidence" value="ECO:0007669"/>
    <property type="project" value="UniProtKB-KW"/>
</dbReference>
<dbReference type="GO" id="GO:0004672">
    <property type="term" value="F:protein kinase activity"/>
    <property type="evidence" value="ECO:0007669"/>
    <property type="project" value="UniProtKB-UniRule"/>
</dbReference>
<dbReference type="GO" id="GO:0010795">
    <property type="term" value="P:regulation of ubiquinone biosynthetic process"/>
    <property type="evidence" value="ECO:0007669"/>
    <property type="project" value="UniProtKB-UniRule"/>
</dbReference>
<dbReference type="GO" id="GO:0006744">
    <property type="term" value="P:ubiquinone biosynthetic process"/>
    <property type="evidence" value="ECO:0007669"/>
    <property type="project" value="UniProtKB-UniPathway"/>
</dbReference>
<dbReference type="CDD" id="cd13972">
    <property type="entry name" value="UbiB"/>
    <property type="match status" value="1"/>
</dbReference>
<dbReference type="HAMAP" id="MF_00414">
    <property type="entry name" value="UbiB"/>
    <property type="match status" value="1"/>
</dbReference>
<dbReference type="InterPro" id="IPR004147">
    <property type="entry name" value="ABC1_dom"/>
</dbReference>
<dbReference type="InterPro" id="IPR011009">
    <property type="entry name" value="Kinase-like_dom_sf"/>
</dbReference>
<dbReference type="InterPro" id="IPR010232">
    <property type="entry name" value="UbiB"/>
</dbReference>
<dbReference type="InterPro" id="IPR045308">
    <property type="entry name" value="UbiB_bact"/>
</dbReference>
<dbReference type="InterPro" id="IPR050154">
    <property type="entry name" value="UbiB_kinase"/>
</dbReference>
<dbReference type="NCBIfam" id="NF003404">
    <property type="entry name" value="PRK04750.1"/>
    <property type="match status" value="1"/>
</dbReference>
<dbReference type="NCBIfam" id="TIGR01982">
    <property type="entry name" value="UbiB"/>
    <property type="match status" value="1"/>
</dbReference>
<dbReference type="PANTHER" id="PTHR10566">
    <property type="entry name" value="CHAPERONE-ACTIVITY OF BC1 COMPLEX CABC1 -RELATED"/>
    <property type="match status" value="1"/>
</dbReference>
<dbReference type="PANTHER" id="PTHR10566:SF113">
    <property type="entry name" value="PROTEIN ACTIVITY OF BC1 COMPLEX KINASE 7, CHLOROPLASTIC"/>
    <property type="match status" value="1"/>
</dbReference>
<dbReference type="Pfam" id="PF03109">
    <property type="entry name" value="ABC1"/>
    <property type="match status" value="1"/>
</dbReference>
<dbReference type="SUPFAM" id="SSF56112">
    <property type="entry name" value="Protein kinase-like (PK-like)"/>
    <property type="match status" value="1"/>
</dbReference>
<comment type="function">
    <text evidence="1">Is probably a protein kinase regulator of UbiI activity which is involved in aerobic coenzyme Q (ubiquinone) biosynthesis.</text>
</comment>
<comment type="pathway">
    <text>Cofactor biosynthesis; ubiquinone biosynthesis [regulation].</text>
</comment>
<comment type="subcellular location">
    <subcellularLocation>
        <location evidence="1">Cell inner membrane</location>
        <topology evidence="1">Single-pass membrane protein</topology>
    </subcellularLocation>
</comment>
<comment type="similarity">
    <text evidence="1">Belongs to the ABC1 family. UbiB subfamily.</text>
</comment>
<keyword id="KW-0067">ATP-binding</keyword>
<keyword id="KW-0997">Cell inner membrane</keyword>
<keyword id="KW-1003">Cell membrane</keyword>
<keyword id="KW-0418">Kinase</keyword>
<keyword id="KW-0472">Membrane</keyword>
<keyword id="KW-0547">Nucleotide-binding</keyword>
<keyword id="KW-1185">Reference proteome</keyword>
<keyword id="KW-0808">Transferase</keyword>
<keyword id="KW-0812">Transmembrane</keyword>
<keyword id="KW-1133">Transmembrane helix</keyword>
<keyword id="KW-0831">Ubiquinone biosynthesis</keyword>